<organism>
    <name type="scientific">Xanthomonas oryzae pv. oryzae (strain KACC10331 / KXO85)</name>
    <dbReference type="NCBI Taxonomy" id="291331"/>
    <lineage>
        <taxon>Bacteria</taxon>
        <taxon>Pseudomonadati</taxon>
        <taxon>Pseudomonadota</taxon>
        <taxon>Gammaproteobacteria</taxon>
        <taxon>Lysobacterales</taxon>
        <taxon>Lysobacteraceae</taxon>
        <taxon>Xanthomonas</taxon>
    </lineage>
</organism>
<gene>
    <name evidence="1" type="primary">rpsD</name>
    <name type="ordered locus">XOO3559</name>
</gene>
<accession>Q5GWV8</accession>
<dbReference type="EMBL" id="AE013598">
    <property type="protein sequence ID" value="AAW76813.1"/>
    <property type="molecule type" value="Genomic_DNA"/>
</dbReference>
<dbReference type="SMR" id="Q5GWV8"/>
<dbReference type="STRING" id="291331.XOO3559"/>
<dbReference type="KEGG" id="xoo:XOO3559"/>
<dbReference type="HOGENOM" id="CLU_092403_0_2_6"/>
<dbReference type="Proteomes" id="UP000006735">
    <property type="component" value="Chromosome"/>
</dbReference>
<dbReference type="GO" id="GO:0015935">
    <property type="term" value="C:small ribosomal subunit"/>
    <property type="evidence" value="ECO:0007669"/>
    <property type="project" value="InterPro"/>
</dbReference>
<dbReference type="GO" id="GO:0019843">
    <property type="term" value="F:rRNA binding"/>
    <property type="evidence" value="ECO:0007669"/>
    <property type="project" value="UniProtKB-UniRule"/>
</dbReference>
<dbReference type="GO" id="GO:0003735">
    <property type="term" value="F:structural constituent of ribosome"/>
    <property type="evidence" value="ECO:0007669"/>
    <property type="project" value="InterPro"/>
</dbReference>
<dbReference type="GO" id="GO:0042274">
    <property type="term" value="P:ribosomal small subunit biogenesis"/>
    <property type="evidence" value="ECO:0007669"/>
    <property type="project" value="TreeGrafter"/>
</dbReference>
<dbReference type="GO" id="GO:0006412">
    <property type="term" value="P:translation"/>
    <property type="evidence" value="ECO:0007669"/>
    <property type="project" value="UniProtKB-UniRule"/>
</dbReference>
<dbReference type="CDD" id="cd00165">
    <property type="entry name" value="S4"/>
    <property type="match status" value="1"/>
</dbReference>
<dbReference type="FunFam" id="1.10.1050.10:FF:000001">
    <property type="entry name" value="30S ribosomal protein S4"/>
    <property type="match status" value="1"/>
</dbReference>
<dbReference type="FunFam" id="3.10.290.10:FF:000001">
    <property type="entry name" value="30S ribosomal protein S4"/>
    <property type="match status" value="1"/>
</dbReference>
<dbReference type="Gene3D" id="1.10.1050.10">
    <property type="entry name" value="Ribosomal Protein S4 Delta 41, Chain A, domain 1"/>
    <property type="match status" value="1"/>
</dbReference>
<dbReference type="Gene3D" id="3.10.290.10">
    <property type="entry name" value="RNA-binding S4 domain"/>
    <property type="match status" value="1"/>
</dbReference>
<dbReference type="HAMAP" id="MF_01306_B">
    <property type="entry name" value="Ribosomal_uS4_B"/>
    <property type="match status" value="1"/>
</dbReference>
<dbReference type="InterPro" id="IPR022801">
    <property type="entry name" value="Ribosomal_uS4"/>
</dbReference>
<dbReference type="InterPro" id="IPR005709">
    <property type="entry name" value="Ribosomal_uS4_bac-type"/>
</dbReference>
<dbReference type="InterPro" id="IPR018079">
    <property type="entry name" value="Ribosomal_uS4_CS"/>
</dbReference>
<dbReference type="InterPro" id="IPR001912">
    <property type="entry name" value="Ribosomal_uS4_N"/>
</dbReference>
<dbReference type="InterPro" id="IPR002942">
    <property type="entry name" value="S4_RNA-bd"/>
</dbReference>
<dbReference type="InterPro" id="IPR036986">
    <property type="entry name" value="S4_RNA-bd_sf"/>
</dbReference>
<dbReference type="NCBIfam" id="NF003717">
    <property type="entry name" value="PRK05327.1"/>
    <property type="match status" value="1"/>
</dbReference>
<dbReference type="NCBIfam" id="TIGR01017">
    <property type="entry name" value="rpsD_bact"/>
    <property type="match status" value="1"/>
</dbReference>
<dbReference type="PANTHER" id="PTHR11831">
    <property type="entry name" value="30S 40S RIBOSOMAL PROTEIN"/>
    <property type="match status" value="1"/>
</dbReference>
<dbReference type="PANTHER" id="PTHR11831:SF4">
    <property type="entry name" value="SMALL RIBOSOMAL SUBUNIT PROTEIN US4M"/>
    <property type="match status" value="1"/>
</dbReference>
<dbReference type="Pfam" id="PF00163">
    <property type="entry name" value="Ribosomal_S4"/>
    <property type="match status" value="1"/>
</dbReference>
<dbReference type="Pfam" id="PF01479">
    <property type="entry name" value="S4"/>
    <property type="match status" value="1"/>
</dbReference>
<dbReference type="SMART" id="SM01390">
    <property type="entry name" value="Ribosomal_S4"/>
    <property type="match status" value="1"/>
</dbReference>
<dbReference type="SMART" id="SM00363">
    <property type="entry name" value="S4"/>
    <property type="match status" value="1"/>
</dbReference>
<dbReference type="SUPFAM" id="SSF55174">
    <property type="entry name" value="Alpha-L RNA-binding motif"/>
    <property type="match status" value="1"/>
</dbReference>
<dbReference type="PROSITE" id="PS00632">
    <property type="entry name" value="RIBOSOMAL_S4"/>
    <property type="match status" value="1"/>
</dbReference>
<dbReference type="PROSITE" id="PS50889">
    <property type="entry name" value="S4"/>
    <property type="match status" value="1"/>
</dbReference>
<keyword id="KW-1185">Reference proteome</keyword>
<keyword id="KW-0687">Ribonucleoprotein</keyword>
<keyword id="KW-0689">Ribosomal protein</keyword>
<keyword id="KW-0694">RNA-binding</keyword>
<keyword id="KW-0699">rRNA-binding</keyword>
<protein>
    <recommendedName>
        <fullName evidence="1">Small ribosomal subunit protein uS4</fullName>
    </recommendedName>
    <alternativeName>
        <fullName evidence="2">30S ribosomal protein S4</fullName>
    </alternativeName>
</protein>
<evidence type="ECO:0000255" key="1">
    <source>
        <dbReference type="HAMAP-Rule" id="MF_01306"/>
    </source>
</evidence>
<evidence type="ECO:0000305" key="2"/>
<reference key="1">
    <citation type="journal article" date="2005" name="Nucleic Acids Res.">
        <title>The genome sequence of Xanthomonas oryzae pathovar oryzae KACC10331, the bacterial blight pathogen of rice.</title>
        <authorList>
            <person name="Lee B.-M."/>
            <person name="Park Y.-J."/>
            <person name="Park D.-S."/>
            <person name="Kang H.-W."/>
            <person name="Kim J.-G."/>
            <person name="Song E.-S."/>
            <person name="Park I.-C."/>
            <person name="Yoon U.-H."/>
            <person name="Hahn J.-H."/>
            <person name="Koo B.-S."/>
            <person name="Lee G.-B."/>
            <person name="Kim H."/>
            <person name="Park H.-S."/>
            <person name="Yoon K.-O."/>
            <person name="Kim J.-H."/>
            <person name="Jung C.-H."/>
            <person name="Koh N.-H."/>
            <person name="Seo J.-S."/>
            <person name="Go S.-J."/>
        </authorList>
    </citation>
    <scope>NUCLEOTIDE SEQUENCE [LARGE SCALE GENOMIC DNA]</scope>
    <source>
        <strain>KACC10331 / KXO85</strain>
    </source>
</reference>
<sequence length="208" mass="23343">MARYIGPTCKLARREGADLSLKSPARALDSKCKLEQKPGQHGASRKGKLSDYATQLREKQKVKRIYGLLERQFRNYYKKASTKKGNTGENLLQLLETRLDNVCYRMGFAVTRPAARQLVSHRCVLVNGKSVNLASYQIKAGDAITLSEKAQKQLRVQEALTVAEQHDMTPSWVEVDSKKFSGVFKAVPDRADLPSDINEALIVELYSK</sequence>
<feature type="chain" id="PRO_0000228941" description="Small ribosomal subunit protein uS4">
    <location>
        <begin position="1"/>
        <end position="208"/>
    </location>
</feature>
<feature type="domain" description="S4 RNA-binding" evidence="1">
    <location>
        <begin position="97"/>
        <end position="160"/>
    </location>
</feature>
<proteinExistence type="inferred from homology"/>
<comment type="function">
    <text evidence="1">One of the primary rRNA binding proteins, it binds directly to 16S rRNA where it nucleates assembly of the body of the 30S subunit.</text>
</comment>
<comment type="function">
    <text evidence="1">With S5 and S12 plays an important role in translational accuracy.</text>
</comment>
<comment type="subunit">
    <text evidence="1">Part of the 30S ribosomal subunit. Contacts protein S5. The interaction surface between S4 and S5 is involved in control of translational fidelity.</text>
</comment>
<comment type="similarity">
    <text evidence="1">Belongs to the universal ribosomal protein uS4 family.</text>
</comment>
<name>RS4_XANOR</name>